<dbReference type="SMR" id="P0DQO4"/>
<dbReference type="GO" id="GO:0005576">
    <property type="term" value="C:extracellular region"/>
    <property type="evidence" value="ECO:0007669"/>
    <property type="project" value="UniProtKB-SubCell"/>
</dbReference>
<dbReference type="GO" id="GO:0005246">
    <property type="term" value="F:calcium channel regulator activity"/>
    <property type="evidence" value="ECO:0007669"/>
    <property type="project" value="UniProtKB-KW"/>
</dbReference>
<dbReference type="GO" id="GO:0008200">
    <property type="term" value="F:ion channel inhibitor activity"/>
    <property type="evidence" value="ECO:0007669"/>
    <property type="project" value="InterPro"/>
</dbReference>
<dbReference type="GO" id="GO:0017080">
    <property type="term" value="F:sodium channel regulator activity"/>
    <property type="evidence" value="ECO:0007669"/>
    <property type="project" value="UniProtKB-KW"/>
</dbReference>
<dbReference type="GO" id="GO:0090729">
    <property type="term" value="F:toxin activity"/>
    <property type="evidence" value="ECO:0007669"/>
    <property type="project" value="UniProtKB-KW"/>
</dbReference>
<dbReference type="InterPro" id="IPR011696">
    <property type="entry name" value="Huwentoxin-1"/>
</dbReference>
<dbReference type="Pfam" id="PF07740">
    <property type="entry name" value="Toxin_12"/>
    <property type="match status" value="1"/>
</dbReference>
<dbReference type="SUPFAM" id="SSF57059">
    <property type="entry name" value="omega toxin-like"/>
    <property type="match status" value="1"/>
</dbReference>
<comment type="function">
    <text evidence="2">Gating-modifier toxin that inhibits both sodium (Nav) and calcium (Cav3) channels by inducing hyperpolarizing shift in voltage-dependence of activation and steady state inactivation. Inhibits Nav1.1/SCN1A, Nav1.2/SCN2A, Nav1.6/SCN6A, Nav1.7/SCN9A and Cav3.1/CACNA1G sodium and calcium channels at nanomolar concentrations (IC(50)=169-621 nM). Surprisingly, selectively slows fast inactivation of Nav1.3/SCN3A. Also shows moderate inhibition of Nav1.3/SCN3A sodium channels (IC(50)=1216 nM).</text>
</comment>
<comment type="subcellular location">
    <subcellularLocation>
        <location evidence="2">Secreted</location>
    </subcellularLocation>
</comment>
<comment type="tissue specificity">
    <text evidence="5">Expressed by the venom gland.</text>
</comment>
<comment type="domain">
    <text evidence="1">The presence of a 'disulfide through disulfide knot' structurally defines this protein as a knottin.</text>
</comment>
<comment type="mass spectrometry">
    <text>Monoisotopic mass.</text>
</comment>
<comment type="miscellaneous">
    <text evidence="2">Negative results: shows no or weak activity on Nav1.4/SCN4A and Nav1.5/SCN5A sodium channels, as well as on Cav3.2/CACNA1H and Cav3.3/CACNA1I calcium channels.</text>
</comment>
<comment type="similarity">
    <text evidence="4">Belongs to the neurotoxin 10 (Hwtx-1) family. 59 (Tltx) subfamily.</text>
</comment>
<protein>
    <recommendedName>
        <fullName evidence="3">Mu/omega-theraphotoxin-Tap2a</fullName>
        <shortName evidence="3">Mu/omega-TRTX-Tap2a</shortName>
    </recommendedName>
</protein>
<accession>P0DQO4</accession>
<evidence type="ECO:0000250" key="1">
    <source>
        <dbReference type="UniProtKB" id="P58426"/>
    </source>
</evidence>
<evidence type="ECO:0000269" key="2">
    <source>
    </source>
</evidence>
<evidence type="ECO:0000303" key="3">
    <source>
    </source>
</evidence>
<evidence type="ECO:0000305" key="4"/>
<evidence type="ECO:0000305" key="5">
    <source>
    </source>
</evidence>
<reference key="1">
    <citation type="journal article" date="2021" name="Pain">
        <title>A spider-venom peptide with multi-target activity on sodium and calcium channels alleviates chronic visceral pain in a model of irritable bowel syndrome.</title>
        <authorList>
            <person name="Cardoso F.C."/>
            <person name="Castro J."/>
            <person name="Grundy L."/>
            <person name="Schober G."/>
            <person name="Garcia-Caraballo S."/>
            <person name="Zhao T."/>
            <person name="Herzig V."/>
            <person name="King G.F."/>
            <person name="Brierley S.M."/>
            <person name="Lewis R.J."/>
        </authorList>
    </citation>
    <scope>PROTEIN SEQUENCE</scope>
    <scope>SUBCELLULAR LOCATION</scope>
    <scope>3D-STRUCTURE MODELING</scope>
    <scope>RECOMBINANT EXPRESSION</scope>
    <scope>MASS SPECTROMETRY</scope>
    <source>
        <tissue>Venom</tissue>
    </source>
</reference>
<name>TAP2A_THEAO</name>
<feature type="chain" id="PRO_0000451750" description="Mu/omega-theraphotoxin-Tap2a" evidence="2">
    <location>
        <begin position="1"/>
        <end position="33"/>
    </location>
</feature>
<feature type="disulfide bond" evidence="1">
    <location>
        <begin position="2"/>
        <end position="17"/>
    </location>
</feature>
<feature type="disulfide bond" evidence="1">
    <location>
        <begin position="9"/>
        <end position="22"/>
    </location>
</feature>
<feature type="disulfide bond" evidence="1">
    <location>
        <begin position="16"/>
        <end position="29"/>
    </location>
</feature>
<proteinExistence type="evidence at protein level"/>
<organism>
    <name type="scientific">Theraphosa apophysis</name>
    <name type="common">Goliath pinkfoot tarantula</name>
    <name type="synonym">Pseudotheraphosa apophysis</name>
    <dbReference type="NCBI Taxonomy" id="1956358"/>
    <lineage>
        <taxon>Eukaryota</taxon>
        <taxon>Metazoa</taxon>
        <taxon>Ecdysozoa</taxon>
        <taxon>Arthropoda</taxon>
        <taxon>Chelicerata</taxon>
        <taxon>Arachnida</taxon>
        <taxon>Araneae</taxon>
        <taxon>Mygalomorphae</taxon>
        <taxon>Theraphosidae</taxon>
        <taxon>Theraphosa</taxon>
    </lineage>
</organism>
<sequence>DCLGFMKPCDINNDKCCSSYVCGRNNHWCKFHL</sequence>
<keyword id="KW-0108">Calcium channel impairing toxin</keyword>
<keyword id="KW-0903">Direct protein sequencing</keyword>
<keyword id="KW-1015">Disulfide bond</keyword>
<keyword id="KW-0872">Ion channel impairing toxin</keyword>
<keyword id="KW-0960">Knottin</keyword>
<keyword id="KW-0528">Neurotoxin</keyword>
<keyword id="KW-0964">Secreted</keyword>
<keyword id="KW-0800">Toxin</keyword>
<keyword id="KW-1218">Voltage-gated calcium channel impairing toxin</keyword>
<keyword id="KW-0738">Voltage-gated sodium channel impairing toxin</keyword>